<protein>
    <recommendedName>
        <fullName evidence="1">N-(5'-phosphoribosyl)anthranilate isomerase</fullName>
        <shortName evidence="1">PRAI</shortName>
        <ecNumber evidence="1">5.3.1.24</ecNumber>
    </recommendedName>
</protein>
<comment type="catalytic activity">
    <reaction evidence="1">
        <text>N-(5-phospho-beta-D-ribosyl)anthranilate = 1-(2-carboxyphenylamino)-1-deoxy-D-ribulose 5-phosphate</text>
        <dbReference type="Rhea" id="RHEA:21540"/>
        <dbReference type="ChEBI" id="CHEBI:18277"/>
        <dbReference type="ChEBI" id="CHEBI:58613"/>
        <dbReference type="EC" id="5.3.1.24"/>
    </reaction>
</comment>
<comment type="pathway">
    <text evidence="1">Amino-acid biosynthesis; L-tryptophan biosynthesis; L-tryptophan from chorismate: step 3/5.</text>
</comment>
<comment type="similarity">
    <text evidence="1">Belongs to the TrpF family.</text>
</comment>
<sequence>MIKVKICGITSPEDALTAVEAGADALGFVFYKESPRHIFPEEAARIINLLPPFVQAVGLFVNEAPEIVNQVSRNCRLGLVQLHGDETPDYCRKIEQRVMKAFRVRSLTCLDPIADYRMSGCLLDAYSPSFYGGTGKSFNWEIAREAMTRGHRIVLAGGLTPDNVAEAIRQVRPYAVDVSSGVESAPGRKDADKVREFIRNAKEAL</sequence>
<feature type="chain" id="PRO_1000095922" description="N-(5'-phosphoribosyl)anthranilate isomerase">
    <location>
        <begin position="1"/>
        <end position="205"/>
    </location>
</feature>
<evidence type="ECO:0000255" key="1">
    <source>
        <dbReference type="HAMAP-Rule" id="MF_00135"/>
    </source>
</evidence>
<keyword id="KW-0028">Amino-acid biosynthesis</keyword>
<keyword id="KW-0057">Aromatic amino acid biosynthesis</keyword>
<keyword id="KW-0413">Isomerase</keyword>
<keyword id="KW-1185">Reference proteome</keyword>
<keyword id="KW-0822">Tryptophan biosynthesis</keyword>
<gene>
    <name evidence="1" type="primary">trpF</name>
    <name type="ordered locus">Glov_1212</name>
</gene>
<organism>
    <name type="scientific">Trichlorobacter lovleyi (strain ATCC BAA-1151 / DSM 17278 / SZ)</name>
    <name type="common">Geobacter lovleyi</name>
    <dbReference type="NCBI Taxonomy" id="398767"/>
    <lineage>
        <taxon>Bacteria</taxon>
        <taxon>Pseudomonadati</taxon>
        <taxon>Thermodesulfobacteriota</taxon>
        <taxon>Desulfuromonadia</taxon>
        <taxon>Geobacterales</taxon>
        <taxon>Geobacteraceae</taxon>
        <taxon>Trichlorobacter</taxon>
    </lineage>
</organism>
<name>TRPF_TRIL1</name>
<proteinExistence type="inferred from homology"/>
<accession>B3E754</accession>
<dbReference type="EC" id="5.3.1.24" evidence="1"/>
<dbReference type="EMBL" id="CP001089">
    <property type="protein sequence ID" value="ACD94934.1"/>
    <property type="molecule type" value="Genomic_DNA"/>
</dbReference>
<dbReference type="RefSeq" id="WP_012469282.1">
    <property type="nucleotide sequence ID" value="NC_010814.1"/>
</dbReference>
<dbReference type="SMR" id="B3E754"/>
<dbReference type="STRING" id="398767.Glov_1212"/>
<dbReference type="KEGG" id="glo:Glov_1212"/>
<dbReference type="eggNOG" id="COG0135">
    <property type="taxonomic scope" value="Bacteria"/>
</dbReference>
<dbReference type="HOGENOM" id="CLU_076364_2_0_7"/>
<dbReference type="OrthoDB" id="9796196at2"/>
<dbReference type="UniPathway" id="UPA00035">
    <property type="reaction ID" value="UER00042"/>
</dbReference>
<dbReference type="Proteomes" id="UP000002420">
    <property type="component" value="Chromosome"/>
</dbReference>
<dbReference type="GO" id="GO:0004640">
    <property type="term" value="F:phosphoribosylanthranilate isomerase activity"/>
    <property type="evidence" value="ECO:0007669"/>
    <property type="project" value="UniProtKB-UniRule"/>
</dbReference>
<dbReference type="GO" id="GO:0000162">
    <property type="term" value="P:L-tryptophan biosynthetic process"/>
    <property type="evidence" value="ECO:0007669"/>
    <property type="project" value="UniProtKB-UniRule"/>
</dbReference>
<dbReference type="CDD" id="cd00405">
    <property type="entry name" value="PRAI"/>
    <property type="match status" value="1"/>
</dbReference>
<dbReference type="FunFam" id="3.20.20.70:FF:000075">
    <property type="entry name" value="Tryptophan biosynthesis protein TRP1"/>
    <property type="match status" value="1"/>
</dbReference>
<dbReference type="Gene3D" id="3.20.20.70">
    <property type="entry name" value="Aldolase class I"/>
    <property type="match status" value="1"/>
</dbReference>
<dbReference type="HAMAP" id="MF_00135">
    <property type="entry name" value="PRAI"/>
    <property type="match status" value="1"/>
</dbReference>
<dbReference type="InterPro" id="IPR013785">
    <property type="entry name" value="Aldolase_TIM"/>
</dbReference>
<dbReference type="InterPro" id="IPR001240">
    <property type="entry name" value="PRAI_dom"/>
</dbReference>
<dbReference type="InterPro" id="IPR011060">
    <property type="entry name" value="RibuloseP-bd_barrel"/>
</dbReference>
<dbReference type="InterPro" id="IPR044643">
    <property type="entry name" value="TrpF_fam"/>
</dbReference>
<dbReference type="NCBIfam" id="NF002298">
    <property type="entry name" value="PRK01222.1-4"/>
    <property type="match status" value="1"/>
</dbReference>
<dbReference type="PANTHER" id="PTHR42894">
    <property type="entry name" value="N-(5'-PHOSPHORIBOSYL)ANTHRANILATE ISOMERASE"/>
    <property type="match status" value="1"/>
</dbReference>
<dbReference type="PANTHER" id="PTHR42894:SF1">
    <property type="entry name" value="N-(5'-PHOSPHORIBOSYL)ANTHRANILATE ISOMERASE"/>
    <property type="match status" value="1"/>
</dbReference>
<dbReference type="Pfam" id="PF00697">
    <property type="entry name" value="PRAI"/>
    <property type="match status" value="1"/>
</dbReference>
<dbReference type="SUPFAM" id="SSF51366">
    <property type="entry name" value="Ribulose-phoshate binding barrel"/>
    <property type="match status" value="1"/>
</dbReference>
<reference key="1">
    <citation type="submission" date="2008-05" db="EMBL/GenBank/DDBJ databases">
        <title>Complete sequence of chromosome of Geobacter lovleyi SZ.</title>
        <authorList>
            <consortium name="US DOE Joint Genome Institute"/>
            <person name="Lucas S."/>
            <person name="Copeland A."/>
            <person name="Lapidus A."/>
            <person name="Glavina del Rio T."/>
            <person name="Dalin E."/>
            <person name="Tice H."/>
            <person name="Bruce D."/>
            <person name="Goodwin L."/>
            <person name="Pitluck S."/>
            <person name="Chertkov O."/>
            <person name="Meincke L."/>
            <person name="Brettin T."/>
            <person name="Detter J.C."/>
            <person name="Han C."/>
            <person name="Tapia R."/>
            <person name="Kuske C.R."/>
            <person name="Schmutz J."/>
            <person name="Larimer F."/>
            <person name="Land M."/>
            <person name="Hauser L."/>
            <person name="Kyrpides N."/>
            <person name="Mikhailova N."/>
            <person name="Sung Y."/>
            <person name="Fletcher K.E."/>
            <person name="Ritalahti K.M."/>
            <person name="Loeffler F.E."/>
            <person name="Richardson P."/>
        </authorList>
    </citation>
    <scope>NUCLEOTIDE SEQUENCE [LARGE SCALE GENOMIC DNA]</scope>
    <source>
        <strain>ATCC BAA-1151 / DSM 17278 / SZ</strain>
    </source>
</reference>